<feature type="chain" id="PRO_1000047086" description="Citrate lyase acyl carrier protein">
    <location>
        <begin position="1"/>
        <end position="97"/>
    </location>
</feature>
<feature type="modified residue" description="O-(phosphoribosyl dephospho-coenzyme A)serine" evidence="1">
    <location>
        <position position="14"/>
    </location>
</feature>
<comment type="function">
    <text evidence="1">Covalent carrier of the coenzyme of citrate lyase.</text>
</comment>
<comment type="subunit">
    <text evidence="1">Oligomer with a subunit composition of (alpha,beta,gamma)6.</text>
</comment>
<comment type="subcellular location">
    <subcellularLocation>
        <location evidence="1">Cytoplasm</location>
    </subcellularLocation>
</comment>
<comment type="similarity">
    <text evidence="1">Belongs to the CitD family.</text>
</comment>
<keyword id="KW-0963">Cytoplasm</keyword>
<keyword id="KW-0597">Phosphoprotein</keyword>
<reference key="1">
    <citation type="journal article" date="2006" name="PLoS Genet.">
        <title>The complete genome sequence and comparative genome analysis of the high pathogenicity Yersinia enterocolitica strain 8081.</title>
        <authorList>
            <person name="Thomson N.R."/>
            <person name="Howard S."/>
            <person name="Wren B.W."/>
            <person name="Holden M.T.G."/>
            <person name="Crossman L."/>
            <person name="Challis G.L."/>
            <person name="Churcher C."/>
            <person name="Mungall K."/>
            <person name="Brooks K."/>
            <person name="Chillingworth T."/>
            <person name="Feltwell T."/>
            <person name="Abdellah Z."/>
            <person name="Hauser H."/>
            <person name="Jagels K."/>
            <person name="Maddison M."/>
            <person name="Moule S."/>
            <person name="Sanders M."/>
            <person name="Whitehead S."/>
            <person name="Quail M.A."/>
            <person name="Dougan G."/>
            <person name="Parkhill J."/>
            <person name="Prentice M.B."/>
        </authorList>
    </citation>
    <scope>NUCLEOTIDE SEQUENCE [LARGE SCALE GENOMIC DNA]</scope>
    <source>
        <strain>NCTC 13174 / 8081</strain>
    </source>
</reference>
<evidence type="ECO:0000255" key="1">
    <source>
        <dbReference type="HAMAP-Rule" id="MF_00805"/>
    </source>
</evidence>
<name>CITD_YERE8</name>
<organism>
    <name type="scientific">Yersinia enterocolitica serotype O:8 / biotype 1B (strain NCTC 13174 / 8081)</name>
    <dbReference type="NCBI Taxonomy" id="393305"/>
    <lineage>
        <taxon>Bacteria</taxon>
        <taxon>Pseudomonadati</taxon>
        <taxon>Pseudomonadota</taxon>
        <taxon>Gammaproteobacteria</taxon>
        <taxon>Enterobacterales</taxon>
        <taxon>Yersiniaceae</taxon>
        <taxon>Yersinia</taxon>
    </lineage>
</organism>
<accession>A1JTI8</accession>
<protein>
    <recommendedName>
        <fullName evidence="1">Citrate lyase acyl carrier protein</fullName>
    </recommendedName>
    <alternativeName>
        <fullName evidence="1">Citrate lyase gamma chain</fullName>
    </alternativeName>
</protein>
<gene>
    <name evidence="1" type="primary">citD</name>
    <name type="ordered locus">YE2652</name>
</gene>
<dbReference type="EMBL" id="AM286415">
    <property type="protein sequence ID" value="CAL12685.1"/>
    <property type="molecule type" value="Genomic_DNA"/>
</dbReference>
<dbReference type="RefSeq" id="WP_005164540.1">
    <property type="nucleotide sequence ID" value="NC_008800.1"/>
</dbReference>
<dbReference type="RefSeq" id="YP_001006844.1">
    <property type="nucleotide sequence ID" value="NC_008800.1"/>
</dbReference>
<dbReference type="SMR" id="A1JTI8"/>
<dbReference type="GeneID" id="31409591"/>
<dbReference type="KEGG" id="yen:YE2652"/>
<dbReference type="PATRIC" id="fig|393305.7.peg.2813"/>
<dbReference type="eggNOG" id="COG3052">
    <property type="taxonomic scope" value="Bacteria"/>
</dbReference>
<dbReference type="HOGENOM" id="CLU_158489_0_0_6"/>
<dbReference type="OrthoDB" id="9798736at2"/>
<dbReference type="Proteomes" id="UP000000642">
    <property type="component" value="Chromosome"/>
</dbReference>
<dbReference type="GO" id="GO:0005737">
    <property type="term" value="C:cytoplasm"/>
    <property type="evidence" value="ECO:0007669"/>
    <property type="project" value="UniProtKB-SubCell"/>
</dbReference>
<dbReference type="HAMAP" id="MF_00805">
    <property type="entry name" value="CitD"/>
    <property type="match status" value="1"/>
</dbReference>
<dbReference type="InterPro" id="IPR006495">
    <property type="entry name" value="CitD"/>
</dbReference>
<dbReference type="InterPro" id="IPR023439">
    <property type="entry name" value="Mal_deCO2ase/Cit_lyase_ACP"/>
</dbReference>
<dbReference type="NCBIfam" id="TIGR01608">
    <property type="entry name" value="citD"/>
    <property type="match status" value="1"/>
</dbReference>
<dbReference type="NCBIfam" id="NF009726">
    <property type="entry name" value="PRK13253.1"/>
    <property type="match status" value="1"/>
</dbReference>
<dbReference type="Pfam" id="PF06857">
    <property type="entry name" value="ACP"/>
    <property type="match status" value="1"/>
</dbReference>
<dbReference type="PIRSF" id="PIRSF002736">
    <property type="entry name" value="Citrt_lyas_gamma"/>
    <property type="match status" value="1"/>
</dbReference>
<proteinExistence type="inferred from homology"/>
<sequence>MKIIREAVAGTLESSDVMVRIAPLNPPEIDLQIHSSVDKQFGDAIRYSVLALLEQYRVTGVQLIIDDKGALDCVLQARLETALLRASDEKILPWRAH</sequence>